<comment type="function">
    <text evidence="1">Stabilizes TERF1 telomeric association by preventing TERF1 recruitment by PML. Stabilizes TERF1 protein by preventing its ubiquitination and hence proteasomal degradation. Does so by interfering with TERF1-binding to FBXO4 E3 ubiquitin-protein ligase. Required for cell proliferation. By stabilizing TRF1 protein during mitosis, promotes metaphase-to-anaphase transition. Stabilizes MDM2 protein by preventing its ubiquitination, and hence proteasomal degradation. By acting on MDM2, may affect TP53 activity. Required for normal processing of ribosomal pre-rRNA. Binds GTP (By similarity).</text>
</comment>
<comment type="subunit">
    <text evidence="1">Interacts with MDM2; this interaction, which occurs in the nucleoplasm, stabilizes MDM2. Indirectly interacts with TP53, via MDM2-binding. Interacts with TERF1; this interaction probably occurs in the nucleoplasm and is increased during mitosis, when the nucleolus is disassembled. This binding may promote TERF1 homodimerization. Interacts with TERT (By similarity).</text>
</comment>
<comment type="subcellular location">
    <subcellularLocation>
        <location evidence="1">Nucleus</location>
        <location evidence="1">Nucleolus</location>
    </subcellularLocation>
</comment>
<comment type="domain">
    <text>In contrast to other GTP-binding proteins, this family is characterized by a circular permutation of the GTPase motifs described by a G4-G1-G3 pattern.</text>
</comment>
<comment type="similarity">
    <text evidence="4">Belongs to the TRAFAC class YlqF/YawG GTPase family.</text>
</comment>
<evidence type="ECO:0000250" key="1"/>
<evidence type="ECO:0000250" key="2">
    <source>
        <dbReference type="UniProtKB" id="Q9NVN8"/>
    </source>
</evidence>
<evidence type="ECO:0000255" key="3"/>
<evidence type="ECO:0000255" key="4">
    <source>
        <dbReference type="PROSITE-ProRule" id="PRU01058"/>
    </source>
</evidence>
<evidence type="ECO:0000256" key="5">
    <source>
        <dbReference type="SAM" id="MobiDB-lite"/>
    </source>
</evidence>
<dbReference type="EMBL" id="BC102363">
    <property type="protein sequence ID" value="AAI02364.1"/>
    <property type="molecule type" value="mRNA"/>
</dbReference>
<dbReference type="RefSeq" id="NP_001029479.1">
    <property type="nucleotide sequence ID" value="NM_001034307.2"/>
</dbReference>
<dbReference type="RefSeq" id="XP_005228268.1">
    <property type="nucleotide sequence ID" value="XM_005228211.5"/>
</dbReference>
<dbReference type="SMR" id="Q3T0J9"/>
<dbReference type="FunCoup" id="Q3T0J9">
    <property type="interactions" value="3204"/>
</dbReference>
<dbReference type="STRING" id="9913.ENSBTAP00000072870"/>
<dbReference type="PaxDb" id="9913-ENSBTAP00000004772"/>
<dbReference type="GeneID" id="507679"/>
<dbReference type="KEGG" id="bta:507679"/>
<dbReference type="CTD" id="54552"/>
<dbReference type="VEuPathDB" id="HostDB:ENSBTAG00000031564"/>
<dbReference type="eggNOG" id="KOG2484">
    <property type="taxonomic scope" value="Eukaryota"/>
</dbReference>
<dbReference type="HOGENOM" id="CLU_011106_5_4_1"/>
<dbReference type="InParanoid" id="Q3T0J9"/>
<dbReference type="OMA" id="NWIKYFR"/>
<dbReference type="OrthoDB" id="444945at2759"/>
<dbReference type="TreeFam" id="TF313085"/>
<dbReference type="CD-CODE" id="D7FE2080">
    <property type="entry name" value="Nucleolus"/>
</dbReference>
<dbReference type="Proteomes" id="UP000009136">
    <property type="component" value="Chromosome X"/>
</dbReference>
<dbReference type="Bgee" id="ENSBTAG00000031564">
    <property type="expression patterns" value="Expressed in uterine horn and 104 other cell types or tissues"/>
</dbReference>
<dbReference type="GO" id="GO:0005730">
    <property type="term" value="C:nucleolus"/>
    <property type="evidence" value="ECO:0000318"/>
    <property type="project" value="GO_Central"/>
</dbReference>
<dbReference type="GO" id="GO:0005525">
    <property type="term" value="F:GTP binding"/>
    <property type="evidence" value="ECO:0007669"/>
    <property type="project" value="UniProtKB-KW"/>
</dbReference>
<dbReference type="GO" id="GO:0042254">
    <property type="term" value="P:ribosome biogenesis"/>
    <property type="evidence" value="ECO:0007669"/>
    <property type="project" value="UniProtKB-KW"/>
</dbReference>
<dbReference type="CDD" id="cd04178">
    <property type="entry name" value="Nucleostemin_like"/>
    <property type="match status" value="1"/>
</dbReference>
<dbReference type="FunFam" id="1.10.1580.10:FF:000002">
    <property type="entry name" value="Guanine nucleotide-binding protein-like 3 (nucleolar)-like"/>
    <property type="match status" value="1"/>
</dbReference>
<dbReference type="FunFam" id="3.40.50.300:FF:000493">
    <property type="entry name" value="Guanine nucleotide-binding protein-like 3-like protein"/>
    <property type="match status" value="1"/>
</dbReference>
<dbReference type="Gene3D" id="1.10.1580.10">
    <property type="match status" value="1"/>
</dbReference>
<dbReference type="Gene3D" id="3.40.50.300">
    <property type="entry name" value="P-loop containing nucleotide triphosphate hydrolases"/>
    <property type="match status" value="1"/>
</dbReference>
<dbReference type="InterPro" id="IPR030378">
    <property type="entry name" value="G_CP_dom"/>
</dbReference>
<dbReference type="InterPro" id="IPR006073">
    <property type="entry name" value="GTP-bd"/>
</dbReference>
<dbReference type="InterPro" id="IPR023179">
    <property type="entry name" value="GTP-bd_ortho_bundle_sf"/>
</dbReference>
<dbReference type="InterPro" id="IPR027417">
    <property type="entry name" value="P-loop_NTPase"/>
</dbReference>
<dbReference type="InterPro" id="IPR050755">
    <property type="entry name" value="TRAFAC_YlqF/YawG_RiboMat"/>
</dbReference>
<dbReference type="PANTHER" id="PTHR11089">
    <property type="entry name" value="GTP-BINDING PROTEIN-RELATED"/>
    <property type="match status" value="1"/>
</dbReference>
<dbReference type="PANTHER" id="PTHR11089:SF33">
    <property type="entry name" value="GUANINE NUCLEOTIDE-BINDING PROTEIN-LIKE 3-LIKE PROTEIN"/>
    <property type="match status" value="1"/>
</dbReference>
<dbReference type="Pfam" id="PF01926">
    <property type="entry name" value="MMR_HSR1"/>
    <property type="match status" value="1"/>
</dbReference>
<dbReference type="PRINTS" id="PR00326">
    <property type="entry name" value="GTP1OBG"/>
</dbReference>
<dbReference type="SUPFAM" id="SSF52540">
    <property type="entry name" value="P-loop containing nucleoside triphosphate hydrolases"/>
    <property type="match status" value="1"/>
</dbReference>
<dbReference type="PROSITE" id="PS51721">
    <property type="entry name" value="G_CP"/>
    <property type="match status" value="1"/>
</dbReference>
<organism>
    <name type="scientific">Bos taurus</name>
    <name type="common">Bovine</name>
    <dbReference type="NCBI Taxonomy" id="9913"/>
    <lineage>
        <taxon>Eukaryota</taxon>
        <taxon>Metazoa</taxon>
        <taxon>Chordata</taxon>
        <taxon>Craniata</taxon>
        <taxon>Vertebrata</taxon>
        <taxon>Euteleostomi</taxon>
        <taxon>Mammalia</taxon>
        <taxon>Eutheria</taxon>
        <taxon>Laurasiatheria</taxon>
        <taxon>Artiodactyla</taxon>
        <taxon>Ruminantia</taxon>
        <taxon>Pecora</taxon>
        <taxon>Bovidae</taxon>
        <taxon>Bovinae</taxon>
        <taxon>Bos</taxon>
    </lineage>
</organism>
<protein>
    <recommendedName>
        <fullName>Guanine nucleotide-binding protein-like 3-like protein</fullName>
    </recommendedName>
</protein>
<name>GNL3L_BOVIN</name>
<proteinExistence type="evidence at transcript level"/>
<sequence>MMKLRHKNKKPGKGSKGCKKPAKQNGKKAATKVAYSPQFFHSNDHASREAELKKKRVGEMREKQQAAREQERHRRRTIESYCQDVLRRQEEFEHKEEVLQELNMFPQLDDEATRKAYYKEFHKVVEYSDVILEVLDSRDPLGCRCFQMEETVLRAEGNKKLVLVLNKIDLVPKEVVEKWLEYLRNELPTVAFKASTQHQVKNLNRCSVPVDQASESLLKSKACFGAENLMRVLGNYCRLGEVRTHIRVGVVGLPNVGKSSLINSLKRSRACSVGAVPGVTKFMQEVYLDKFIRLLDAPGIVPGPNSEVGTILRNCIHVQKLADPVTPVETILQRCNLEEISSYYGVSGFQTTEHFLTAVAHRLGKKKKGGIYSQEQAAKAVLADWVSGKISFYTLPPSTHTLPTHLSAEIVKEMTEVFDIEDTEQANEDTMECLATGESDELLGDMDPLEMEIKWLHSPMVKIADAMENKTTVYKIGDLTGYCTNPNRHQMGWAKRNVDLHPRNNSMVDVCPVDRRPVLQRIMETDPLQQGQALASALKKKKKIQKRADKLASKLSDSMMSALDLSGNADDSAGD</sequence>
<accession>Q3T0J9</accession>
<gene>
    <name type="primary">GNL3L</name>
</gene>
<feature type="chain" id="PRO_0000284380" description="Guanine nucleotide-binding protein-like 3-like protein">
    <location>
        <begin position="1"/>
        <end position="575"/>
    </location>
</feature>
<feature type="domain" description="CP-type G" evidence="4">
    <location>
        <begin position="118"/>
        <end position="303"/>
    </location>
</feature>
<feature type="region of interest" description="Disordered" evidence="5">
    <location>
        <begin position="1"/>
        <end position="75"/>
    </location>
</feature>
<feature type="region of interest" description="Required for nucleolar localization" evidence="1">
    <location>
        <begin position="9"/>
        <end position="28"/>
    </location>
</feature>
<feature type="coiled-coil region" evidence="3">
    <location>
        <begin position="51"/>
        <end position="79"/>
    </location>
</feature>
<feature type="compositionally biased region" description="Basic residues" evidence="5">
    <location>
        <begin position="1"/>
        <end position="30"/>
    </location>
</feature>
<feature type="compositionally biased region" description="Basic and acidic residues" evidence="5">
    <location>
        <begin position="42"/>
        <end position="72"/>
    </location>
</feature>
<feature type="binding site" evidence="3">
    <location>
        <begin position="166"/>
        <end position="169"/>
    </location>
    <ligand>
        <name>GTP</name>
        <dbReference type="ChEBI" id="CHEBI:37565"/>
    </ligand>
</feature>
<feature type="binding site" evidence="3">
    <location>
        <begin position="252"/>
        <end position="259"/>
    </location>
    <ligand>
        <name>GTP</name>
        <dbReference type="ChEBI" id="CHEBI:37565"/>
    </ligand>
</feature>
<feature type="binding site" evidence="3">
    <location>
        <begin position="296"/>
        <end position="299"/>
    </location>
    <ligand>
        <name>GTP</name>
        <dbReference type="ChEBI" id="CHEBI:37565"/>
    </ligand>
</feature>
<feature type="cross-link" description="Glycyl lysine isopeptide (Lys-Gly) (interchain with G-Cter in SUMO1)" evidence="2">
    <location>
        <position position="470"/>
    </location>
</feature>
<keyword id="KW-0175">Coiled coil</keyword>
<keyword id="KW-0342">GTP-binding</keyword>
<keyword id="KW-1017">Isopeptide bond</keyword>
<keyword id="KW-0547">Nucleotide-binding</keyword>
<keyword id="KW-0539">Nucleus</keyword>
<keyword id="KW-1185">Reference proteome</keyword>
<keyword id="KW-0690">Ribosome biogenesis</keyword>
<keyword id="KW-0832">Ubl conjugation</keyword>
<reference key="1">
    <citation type="submission" date="2005-08" db="EMBL/GenBank/DDBJ databases">
        <authorList>
            <consortium name="NIH - Mammalian Gene Collection (MGC) project"/>
        </authorList>
    </citation>
    <scope>NUCLEOTIDE SEQUENCE [LARGE SCALE MRNA]</scope>
    <source>
        <strain>Crossbred X Angus</strain>
        <tissue>Ileum</tissue>
    </source>
</reference>